<feature type="chain" id="PRO_1000142274" description="Large ribosomal subunit protein uL22">
    <location>
        <begin position="1"/>
        <end position="121"/>
    </location>
</feature>
<gene>
    <name evidence="1" type="primary">rplV</name>
    <name type="ordered locus">KRH_06210</name>
</gene>
<keyword id="KW-1185">Reference proteome</keyword>
<keyword id="KW-0687">Ribonucleoprotein</keyword>
<keyword id="KW-0689">Ribosomal protein</keyword>
<keyword id="KW-0694">RNA-binding</keyword>
<keyword id="KW-0699">rRNA-binding</keyword>
<protein>
    <recommendedName>
        <fullName evidence="1">Large ribosomal subunit protein uL22</fullName>
    </recommendedName>
    <alternativeName>
        <fullName evidence="2">50S ribosomal protein L22</fullName>
    </alternativeName>
</protein>
<reference key="1">
    <citation type="journal article" date="2008" name="J. Bacteriol.">
        <title>Complete genome sequence of the soil actinomycete Kocuria rhizophila.</title>
        <authorList>
            <person name="Takarada H."/>
            <person name="Sekine M."/>
            <person name="Kosugi H."/>
            <person name="Matsuo Y."/>
            <person name="Fujisawa T."/>
            <person name="Omata S."/>
            <person name="Kishi E."/>
            <person name="Shimizu A."/>
            <person name="Tsukatani N."/>
            <person name="Tanikawa S."/>
            <person name="Fujita N."/>
            <person name="Harayama S."/>
        </authorList>
    </citation>
    <scope>NUCLEOTIDE SEQUENCE [LARGE SCALE GENOMIC DNA]</scope>
    <source>
        <strain>ATCC 9341 / DSM 348 / NBRC 103217 / DC2201</strain>
    </source>
</reference>
<dbReference type="EMBL" id="AP009152">
    <property type="protein sequence ID" value="BAG28968.1"/>
    <property type="molecule type" value="Genomic_DNA"/>
</dbReference>
<dbReference type="RefSeq" id="WP_012397693.1">
    <property type="nucleotide sequence ID" value="NZ_VECX01000001.1"/>
</dbReference>
<dbReference type="SMR" id="B2GIZ8"/>
<dbReference type="STRING" id="378753.KRH_06210"/>
<dbReference type="GeneID" id="93241019"/>
<dbReference type="KEGG" id="krh:KRH_06210"/>
<dbReference type="eggNOG" id="COG0091">
    <property type="taxonomic scope" value="Bacteria"/>
</dbReference>
<dbReference type="HOGENOM" id="CLU_083987_3_3_11"/>
<dbReference type="OrthoDB" id="9805969at2"/>
<dbReference type="Proteomes" id="UP000008838">
    <property type="component" value="Chromosome"/>
</dbReference>
<dbReference type="GO" id="GO:0022625">
    <property type="term" value="C:cytosolic large ribosomal subunit"/>
    <property type="evidence" value="ECO:0007669"/>
    <property type="project" value="TreeGrafter"/>
</dbReference>
<dbReference type="GO" id="GO:0019843">
    <property type="term" value="F:rRNA binding"/>
    <property type="evidence" value="ECO:0007669"/>
    <property type="project" value="UniProtKB-UniRule"/>
</dbReference>
<dbReference type="GO" id="GO:0003735">
    <property type="term" value="F:structural constituent of ribosome"/>
    <property type="evidence" value="ECO:0007669"/>
    <property type="project" value="InterPro"/>
</dbReference>
<dbReference type="GO" id="GO:0006412">
    <property type="term" value="P:translation"/>
    <property type="evidence" value="ECO:0007669"/>
    <property type="project" value="UniProtKB-UniRule"/>
</dbReference>
<dbReference type="CDD" id="cd00336">
    <property type="entry name" value="Ribosomal_L22"/>
    <property type="match status" value="1"/>
</dbReference>
<dbReference type="Gene3D" id="3.90.470.10">
    <property type="entry name" value="Ribosomal protein L22/L17"/>
    <property type="match status" value="1"/>
</dbReference>
<dbReference type="HAMAP" id="MF_01331_B">
    <property type="entry name" value="Ribosomal_uL22_B"/>
    <property type="match status" value="1"/>
</dbReference>
<dbReference type="InterPro" id="IPR001063">
    <property type="entry name" value="Ribosomal_uL22"/>
</dbReference>
<dbReference type="InterPro" id="IPR005727">
    <property type="entry name" value="Ribosomal_uL22_bac/chlpt-type"/>
</dbReference>
<dbReference type="InterPro" id="IPR047867">
    <property type="entry name" value="Ribosomal_uL22_bac/org-type"/>
</dbReference>
<dbReference type="InterPro" id="IPR018260">
    <property type="entry name" value="Ribosomal_uL22_CS"/>
</dbReference>
<dbReference type="InterPro" id="IPR036394">
    <property type="entry name" value="Ribosomal_uL22_sf"/>
</dbReference>
<dbReference type="NCBIfam" id="TIGR01044">
    <property type="entry name" value="rplV_bact"/>
    <property type="match status" value="1"/>
</dbReference>
<dbReference type="PANTHER" id="PTHR13501">
    <property type="entry name" value="CHLOROPLAST 50S RIBOSOMAL PROTEIN L22-RELATED"/>
    <property type="match status" value="1"/>
</dbReference>
<dbReference type="PANTHER" id="PTHR13501:SF8">
    <property type="entry name" value="LARGE RIBOSOMAL SUBUNIT PROTEIN UL22M"/>
    <property type="match status" value="1"/>
</dbReference>
<dbReference type="Pfam" id="PF00237">
    <property type="entry name" value="Ribosomal_L22"/>
    <property type="match status" value="1"/>
</dbReference>
<dbReference type="SUPFAM" id="SSF54843">
    <property type="entry name" value="Ribosomal protein L22"/>
    <property type="match status" value="1"/>
</dbReference>
<dbReference type="PROSITE" id="PS00464">
    <property type="entry name" value="RIBOSOMAL_L22"/>
    <property type="match status" value="1"/>
</dbReference>
<name>RL22_KOCRD</name>
<organism>
    <name type="scientific">Kocuria rhizophila (strain ATCC 9341 / DSM 348 / NBRC 103217 / DC2201)</name>
    <dbReference type="NCBI Taxonomy" id="378753"/>
    <lineage>
        <taxon>Bacteria</taxon>
        <taxon>Bacillati</taxon>
        <taxon>Actinomycetota</taxon>
        <taxon>Actinomycetes</taxon>
        <taxon>Micrococcales</taxon>
        <taxon>Micrococcaceae</taxon>
        <taxon>Kocuria</taxon>
    </lineage>
</organism>
<proteinExistence type="inferred from homology"/>
<accession>B2GIZ8</accession>
<sequence length="121" mass="13431">MEAKASARYIRVTPMKARRVVNLIRGQQANEALAILKFAPQAASEPVFKVLESAVANARQKADREGLAFKPEDLVVSAAFVDEGPTMKRFQPRAQGRAFRINKRTSHVTVVVATPEKEEVR</sequence>
<comment type="function">
    <text evidence="1">This protein binds specifically to 23S rRNA; its binding is stimulated by other ribosomal proteins, e.g. L4, L17, and L20. It is important during the early stages of 50S assembly. It makes multiple contacts with different domains of the 23S rRNA in the assembled 50S subunit and ribosome (By similarity).</text>
</comment>
<comment type="function">
    <text evidence="1">The globular domain of the protein is located near the polypeptide exit tunnel on the outside of the subunit, while an extended beta-hairpin is found that lines the wall of the exit tunnel in the center of the 70S ribosome.</text>
</comment>
<comment type="subunit">
    <text evidence="1">Part of the 50S ribosomal subunit.</text>
</comment>
<comment type="similarity">
    <text evidence="1">Belongs to the universal ribosomal protein uL22 family.</text>
</comment>
<evidence type="ECO:0000255" key="1">
    <source>
        <dbReference type="HAMAP-Rule" id="MF_01331"/>
    </source>
</evidence>
<evidence type="ECO:0000305" key="2"/>